<keyword id="KW-0687">Ribonucleoprotein</keyword>
<keyword id="KW-0689">Ribosomal protein</keyword>
<gene>
    <name evidence="1" type="primary">rpmF</name>
    <name type="ordered locus">EcSMS35_2038</name>
</gene>
<feature type="chain" id="PRO_1000120123" description="Large ribosomal subunit protein bL32">
    <location>
        <begin position="1"/>
        <end position="57"/>
    </location>
</feature>
<feature type="region of interest" description="Disordered" evidence="2">
    <location>
        <begin position="1"/>
        <end position="38"/>
    </location>
</feature>
<accession>B1LI56</accession>
<comment type="similarity">
    <text evidence="1">Belongs to the bacterial ribosomal protein bL32 family.</text>
</comment>
<organism>
    <name type="scientific">Escherichia coli (strain SMS-3-5 / SECEC)</name>
    <dbReference type="NCBI Taxonomy" id="439855"/>
    <lineage>
        <taxon>Bacteria</taxon>
        <taxon>Pseudomonadati</taxon>
        <taxon>Pseudomonadota</taxon>
        <taxon>Gammaproteobacteria</taxon>
        <taxon>Enterobacterales</taxon>
        <taxon>Enterobacteriaceae</taxon>
        <taxon>Escherichia</taxon>
    </lineage>
</organism>
<proteinExistence type="inferred from homology"/>
<evidence type="ECO:0000255" key="1">
    <source>
        <dbReference type="HAMAP-Rule" id="MF_00340"/>
    </source>
</evidence>
<evidence type="ECO:0000256" key="2">
    <source>
        <dbReference type="SAM" id="MobiDB-lite"/>
    </source>
</evidence>
<evidence type="ECO:0000305" key="3"/>
<reference key="1">
    <citation type="journal article" date="2008" name="J. Bacteriol.">
        <title>Insights into the environmental resistance gene pool from the genome sequence of the multidrug-resistant environmental isolate Escherichia coli SMS-3-5.</title>
        <authorList>
            <person name="Fricke W.F."/>
            <person name="Wright M.S."/>
            <person name="Lindell A.H."/>
            <person name="Harkins D.M."/>
            <person name="Baker-Austin C."/>
            <person name="Ravel J."/>
            <person name="Stepanauskas R."/>
        </authorList>
    </citation>
    <scope>NUCLEOTIDE SEQUENCE [LARGE SCALE GENOMIC DNA]</scope>
    <source>
        <strain>SMS-3-5 / SECEC</strain>
    </source>
</reference>
<sequence>MAVQQNKPTRSKRGMRRSHDALTAVTSLSVDKTSGEKHLRHHITADGYYRGRKVIAK</sequence>
<name>RL32_ECOSM</name>
<protein>
    <recommendedName>
        <fullName evidence="1">Large ribosomal subunit protein bL32</fullName>
    </recommendedName>
    <alternativeName>
        <fullName evidence="3">50S ribosomal protein L32</fullName>
    </alternativeName>
</protein>
<dbReference type="EMBL" id="CP000970">
    <property type="protein sequence ID" value="ACB17264.1"/>
    <property type="molecule type" value="Genomic_DNA"/>
</dbReference>
<dbReference type="RefSeq" id="WP_000290727.1">
    <property type="nucleotide sequence ID" value="NC_010498.1"/>
</dbReference>
<dbReference type="SMR" id="B1LI56"/>
<dbReference type="GeneID" id="93776319"/>
<dbReference type="KEGG" id="ecm:EcSMS35_2038"/>
<dbReference type="HOGENOM" id="CLU_129084_2_1_6"/>
<dbReference type="Proteomes" id="UP000007011">
    <property type="component" value="Chromosome"/>
</dbReference>
<dbReference type="GO" id="GO:0015934">
    <property type="term" value="C:large ribosomal subunit"/>
    <property type="evidence" value="ECO:0007669"/>
    <property type="project" value="InterPro"/>
</dbReference>
<dbReference type="GO" id="GO:0003735">
    <property type="term" value="F:structural constituent of ribosome"/>
    <property type="evidence" value="ECO:0007669"/>
    <property type="project" value="InterPro"/>
</dbReference>
<dbReference type="GO" id="GO:0006412">
    <property type="term" value="P:translation"/>
    <property type="evidence" value="ECO:0007669"/>
    <property type="project" value="UniProtKB-UniRule"/>
</dbReference>
<dbReference type="HAMAP" id="MF_00340">
    <property type="entry name" value="Ribosomal_bL32"/>
    <property type="match status" value="1"/>
</dbReference>
<dbReference type="InterPro" id="IPR002677">
    <property type="entry name" value="Ribosomal_bL32"/>
</dbReference>
<dbReference type="InterPro" id="IPR044957">
    <property type="entry name" value="Ribosomal_bL32_bact"/>
</dbReference>
<dbReference type="InterPro" id="IPR011332">
    <property type="entry name" value="Ribosomal_zn-bd"/>
</dbReference>
<dbReference type="NCBIfam" id="TIGR01031">
    <property type="entry name" value="rpmF_bact"/>
    <property type="match status" value="1"/>
</dbReference>
<dbReference type="PANTHER" id="PTHR35534">
    <property type="entry name" value="50S RIBOSOMAL PROTEIN L32"/>
    <property type="match status" value="1"/>
</dbReference>
<dbReference type="PANTHER" id="PTHR35534:SF1">
    <property type="entry name" value="LARGE RIBOSOMAL SUBUNIT PROTEIN BL32"/>
    <property type="match status" value="1"/>
</dbReference>
<dbReference type="Pfam" id="PF01783">
    <property type="entry name" value="Ribosomal_L32p"/>
    <property type="match status" value="1"/>
</dbReference>
<dbReference type="SUPFAM" id="SSF57829">
    <property type="entry name" value="Zn-binding ribosomal proteins"/>
    <property type="match status" value="1"/>
</dbReference>